<sequence>MAERLTGKPVADAIKEELKGRVADLKAKGIVPKLGIVRVGARPDDLYYEGGAKKTCESIGMDYEVFEYPQDIDQESFEKAIIEIGAKKDIHGILMFSPLPKHLNERKIRSLIPVEKDVDSLTLGSAGKVFADDPTGFPPCTPTAVMEILKYYNIPLEGKRAVVLGRSLVVGKPAAILLLRENATVTICHSRTKNLPDVCREADILVAAVGRAKMVKEDYVKPGMVVIDVGINEDPDNPGKYCGDVDFDKVEPIVDKITPVPGGVGSVTTAVLCKHTVKACEILNGLV</sequence>
<comment type="function">
    <text evidence="1">Catalyzes the oxidation of 5,10-methylenetetrahydrofolate to 5,10-methenyltetrahydrofolate and then the hydrolysis of 5,10-methenyltetrahydrofolate to 10-formyltetrahydrofolate.</text>
</comment>
<comment type="catalytic activity">
    <reaction evidence="1">
        <text>(6R)-5,10-methylene-5,6,7,8-tetrahydrofolate + NADP(+) = (6R)-5,10-methenyltetrahydrofolate + NADPH</text>
        <dbReference type="Rhea" id="RHEA:22812"/>
        <dbReference type="ChEBI" id="CHEBI:15636"/>
        <dbReference type="ChEBI" id="CHEBI:57455"/>
        <dbReference type="ChEBI" id="CHEBI:57783"/>
        <dbReference type="ChEBI" id="CHEBI:58349"/>
        <dbReference type="EC" id="1.5.1.5"/>
    </reaction>
</comment>
<comment type="catalytic activity">
    <reaction evidence="1">
        <text>(6R)-5,10-methenyltetrahydrofolate + H2O = (6R)-10-formyltetrahydrofolate + H(+)</text>
        <dbReference type="Rhea" id="RHEA:23700"/>
        <dbReference type="ChEBI" id="CHEBI:15377"/>
        <dbReference type="ChEBI" id="CHEBI:15378"/>
        <dbReference type="ChEBI" id="CHEBI:57455"/>
        <dbReference type="ChEBI" id="CHEBI:195366"/>
        <dbReference type="EC" id="3.5.4.9"/>
    </reaction>
</comment>
<comment type="pathway">
    <text evidence="1">One-carbon metabolism; tetrahydrofolate interconversion.</text>
</comment>
<comment type="subunit">
    <text evidence="1">Homodimer.</text>
</comment>
<comment type="similarity">
    <text evidence="1">Belongs to the tetrahydrofolate dehydrogenase/cyclohydrolase family.</text>
</comment>
<proteinExistence type="inferred from homology"/>
<organism>
    <name type="scientific">Carboxydothermus hydrogenoformans (strain ATCC BAA-161 / DSM 6008 / Z-2901)</name>
    <dbReference type="NCBI Taxonomy" id="246194"/>
    <lineage>
        <taxon>Bacteria</taxon>
        <taxon>Bacillati</taxon>
        <taxon>Bacillota</taxon>
        <taxon>Clostridia</taxon>
        <taxon>Thermoanaerobacterales</taxon>
        <taxon>Thermoanaerobacteraceae</taxon>
        <taxon>Carboxydothermus</taxon>
    </lineage>
</organism>
<feature type="chain" id="PRO_0000268306" description="Bifunctional protein FolD">
    <location>
        <begin position="1"/>
        <end position="287"/>
    </location>
</feature>
<feature type="binding site" evidence="1">
    <location>
        <begin position="165"/>
        <end position="167"/>
    </location>
    <ligand>
        <name>NADP(+)</name>
        <dbReference type="ChEBI" id="CHEBI:58349"/>
    </ligand>
</feature>
<feature type="binding site" evidence="1">
    <location>
        <position position="190"/>
    </location>
    <ligand>
        <name>NADP(+)</name>
        <dbReference type="ChEBI" id="CHEBI:58349"/>
    </ligand>
</feature>
<feature type="binding site" evidence="1">
    <location>
        <position position="231"/>
    </location>
    <ligand>
        <name>NADP(+)</name>
        <dbReference type="ChEBI" id="CHEBI:58349"/>
    </ligand>
</feature>
<protein>
    <recommendedName>
        <fullName evidence="1">Bifunctional protein FolD</fullName>
    </recommendedName>
    <domain>
        <recommendedName>
            <fullName evidence="1">Methylenetetrahydrofolate dehydrogenase</fullName>
            <ecNumber evidence="1">1.5.1.5</ecNumber>
        </recommendedName>
    </domain>
    <domain>
        <recommendedName>
            <fullName evidence="1">Methenyltetrahydrofolate cyclohydrolase</fullName>
            <ecNumber evidence="1">3.5.4.9</ecNumber>
        </recommendedName>
    </domain>
</protein>
<dbReference type="EC" id="1.5.1.5" evidence="1"/>
<dbReference type="EC" id="3.5.4.9" evidence="1"/>
<dbReference type="EMBL" id="CP000141">
    <property type="protein sequence ID" value="ABB15843.1"/>
    <property type="molecule type" value="Genomic_DNA"/>
</dbReference>
<dbReference type="RefSeq" id="WP_011344772.1">
    <property type="nucleotide sequence ID" value="NC_007503.1"/>
</dbReference>
<dbReference type="SMR" id="Q3AAY6"/>
<dbReference type="FunCoup" id="Q3AAY6">
    <property type="interactions" value="376"/>
</dbReference>
<dbReference type="STRING" id="246194.CHY_1878"/>
<dbReference type="KEGG" id="chy:CHY_1878"/>
<dbReference type="eggNOG" id="COG0190">
    <property type="taxonomic scope" value="Bacteria"/>
</dbReference>
<dbReference type="HOGENOM" id="CLU_034045_2_1_9"/>
<dbReference type="InParanoid" id="Q3AAY6"/>
<dbReference type="OrthoDB" id="9803580at2"/>
<dbReference type="UniPathway" id="UPA00193"/>
<dbReference type="Proteomes" id="UP000002706">
    <property type="component" value="Chromosome"/>
</dbReference>
<dbReference type="GO" id="GO:0005829">
    <property type="term" value="C:cytosol"/>
    <property type="evidence" value="ECO:0007669"/>
    <property type="project" value="TreeGrafter"/>
</dbReference>
<dbReference type="GO" id="GO:0004477">
    <property type="term" value="F:methenyltetrahydrofolate cyclohydrolase activity"/>
    <property type="evidence" value="ECO:0007669"/>
    <property type="project" value="UniProtKB-UniRule"/>
</dbReference>
<dbReference type="GO" id="GO:0004488">
    <property type="term" value="F:methylenetetrahydrofolate dehydrogenase (NADP+) activity"/>
    <property type="evidence" value="ECO:0007669"/>
    <property type="project" value="UniProtKB-UniRule"/>
</dbReference>
<dbReference type="GO" id="GO:0000105">
    <property type="term" value="P:L-histidine biosynthetic process"/>
    <property type="evidence" value="ECO:0007669"/>
    <property type="project" value="UniProtKB-KW"/>
</dbReference>
<dbReference type="GO" id="GO:0009086">
    <property type="term" value="P:methionine biosynthetic process"/>
    <property type="evidence" value="ECO:0007669"/>
    <property type="project" value="UniProtKB-KW"/>
</dbReference>
<dbReference type="GO" id="GO:0006164">
    <property type="term" value="P:purine nucleotide biosynthetic process"/>
    <property type="evidence" value="ECO:0007669"/>
    <property type="project" value="UniProtKB-KW"/>
</dbReference>
<dbReference type="GO" id="GO:0035999">
    <property type="term" value="P:tetrahydrofolate interconversion"/>
    <property type="evidence" value="ECO:0007669"/>
    <property type="project" value="UniProtKB-UniRule"/>
</dbReference>
<dbReference type="CDD" id="cd01080">
    <property type="entry name" value="NAD_bind_m-THF_DH_Cyclohyd"/>
    <property type="match status" value="1"/>
</dbReference>
<dbReference type="FunFam" id="3.40.50.720:FF:000094">
    <property type="entry name" value="Bifunctional protein FolD"/>
    <property type="match status" value="1"/>
</dbReference>
<dbReference type="Gene3D" id="3.40.50.10860">
    <property type="entry name" value="Leucine Dehydrogenase, chain A, domain 1"/>
    <property type="match status" value="1"/>
</dbReference>
<dbReference type="Gene3D" id="3.40.50.720">
    <property type="entry name" value="NAD(P)-binding Rossmann-like Domain"/>
    <property type="match status" value="1"/>
</dbReference>
<dbReference type="HAMAP" id="MF_01576">
    <property type="entry name" value="THF_DHG_CYH"/>
    <property type="match status" value="1"/>
</dbReference>
<dbReference type="InterPro" id="IPR046346">
    <property type="entry name" value="Aminoacid_DH-like_N_sf"/>
</dbReference>
<dbReference type="InterPro" id="IPR036291">
    <property type="entry name" value="NAD(P)-bd_dom_sf"/>
</dbReference>
<dbReference type="InterPro" id="IPR000672">
    <property type="entry name" value="THF_DH/CycHdrlase"/>
</dbReference>
<dbReference type="InterPro" id="IPR020630">
    <property type="entry name" value="THF_DH/CycHdrlase_cat_dom"/>
</dbReference>
<dbReference type="InterPro" id="IPR020631">
    <property type="entry name" value="THF_DH/CycHdrlase_NAD-bd_dom"/>
</dbReference>
<dbReference type="PANTHER" id="PTHR48099:SF5">
    <property type="entry name" value="C-1-TETRAHYDROFOLATE SYNTHASE, CYTOPLASMIC"/>
    <property type="match status" value="1"/>
</dbReference>
<dbReference type="PANTHER" id="PTHR48099">
    <property type="entry name" value="C-1-TETRAHYDROFOLATE SYNTHASE, CYTOPLASMIC-RELATED"/>
    <property type="match status" value="1"/>
</dbReference>
<dbReference type="Pfam" id="PF00763">
    <property type="entry name" value="THF_DHG_CYH"/>
    <property type="match status" value="1"/>
</dbReference>
<dbReference type="Pfam" id="PF02882">
    <property type="entry name" value="THF_DHG_CYH_C"/>
    <property type="match status" value="1"/>
</dbReference>
<dbReference type="PRINTS" id="PR00085">
    <property type="entry name" value="THFDHDRGNASE"/>
</dbReference>
<dbReference type="SUPFAM" id="SSF53223">
    <property type="entry name" value="Aminoacid dehydrogenase-like, N-terminal domain"/>
    <property type="match status" value="1"/>
</dbReference>
<dbReference type="SUPFAM" id="SSF51735">
    <property type="entry name" value="NAD(P)-binding Rossmann-fold domains"/>
    <property type="match status" value="1"/>
</dbReference>
<evidence type="ECO:0000255" key="1">
    <source>
        <dbReference type="HAMAP-Rule" id="MF_01576"/>
    </source>
</evidence>
<reference key="1">
    <citation type="journal article" date="2005" name="PLoS Genet.">
        <title>Life in hot carbon monoxide: the complete genome sequence of Carboxydothermus hydrogenoformans Z-2901.</title>
        <authorList>
            <person name="Wu M."/>
            <person name="Ren Q."/>
            <person name="Durkin A.S."/>
            <person name="Daugherty S.C."/>
            <person name="Brinkac L.M."/>
            <person name="Dodson R.J."/>
            <person name="Madupu R."/>
            <person name="Sullivan S.A."/>
            <person name="Kolonay J.F."/>
            <person name="Nelson W.C."/>
            <person name="Tallon L.J."/>
            <person name="Jones K.M."/>
            <person name="Ulrich L.E."/>
            <person name="Gonzalez J.M."/>
            <person name="Zhulin I.B."/>
            <person name="Robb F.T."/>
            <person name="Eisen J.A."/>
        </authorList>
    </citation>
    <scope>NUCLEOTIDE SEQUENCE [LARGE SCALE GENOMIC DNA]</scope>
    <source>
        <strain>ATCC BAA-161 / DSM 6008 / Z-2901</strain>
    </source>
</reference>
<keyword id="KW-0028">Amino-acid biosynthesis</keyword>
<keyword id="KW-0368">Histidine biosynthesis</keyword>
<keyword id="KW-0378">Hydrolase</keyword>
<keyword id="KW-0486">Methionine biosynthesis</keyword>
<keyword id="KW-0511">Multifunctional enzyme</keyword>
<keyword id="KW-0521">NADP</keyword>
<keyword id="KW-0554">One-carbon metabolism</keyword>
<keyword id="KW-0560">Oxidoreductase</keyword>
<keyword id="KW-0658">Purine biosynthesis</keyword>
<keyword id="KW-1185">Reference proteome</keyword>
<accession>Q3AAY6</accession>
<gene>
    <name evidence="1" type="primary">folD</name>
    <name type="ordered locus">CHY_1878</name>
</gene>
<name>FOLD_CARHZ</name>